<organism>
    <name type="scientific">Influenza A virus (strain A/Swine/Colorado/1/1977 H3N2)</name>
    <dbReference type="NCBI Taxonomy" id="385645"/>
    <lineage>
        <taxon>Viruses</taxon>
        <taxon>Riboviria</taxon>
        <taxon>Orthornavirae</taxon>
        <taxon>Negarnaviricota</taxon>
        <taxon>Polyploviricotina</taxon>
        <taxon>Insthoviricetes</taxon>
        <taxon>Articulavirales</taxon>
        <taxon>Orthomyxoviridae</taxon>
        <taxon>Alphainfluenzavirus</taxon>
        <taxon>Alphainfluenzavirus influenzae</taxon>
        <taxon>Influenza A virus</taxon>
    </lineage>
</organism>
<comment type="function">
    <text evidence="2">Plays an essential role in viral RNA transcription and replication by forming the heterotrimeric polymerase complex together with PB1 and PB2 subunits. The complex transcribes viral mRNAs by using a unique mechanism called cap-snatching. It consists in the hijacking and cleavage of host capped pre-mRNAs. These short capped RNAs are then used as primers for viral mRNAs. The PB2 subunit is responsible for the binding of the 5' cap of cellular pre-mRNAs which are subsequently cleaved after 10-13 nucleotides by the PA subunit that carries the endonuclease activity.</text>
</comment>
<comment type="cofactor">
    <cofactor evidence="2">
        <name>Mn(2+)</name>
        <dbReference type="ChEBI" id="CHEBI:29035"/>
    </cofactor>
    <text evidence="2">Binds 2 manganese ions per subunit.</text>
</comment>
<comment type="subunit">
    <text evidence="1 2">Influenza RNA polymerase is composed of three subunits: PB1, PB2 and PA. Interacts (via C-terminus) with PB1 (via N-terminus).</text>
</comment>
<comment type="subcellular location">
    <subcellularLocation>
        <location evidence="2">Host cytoplasm</location>
    </subcellularLocation>
    <subcellularLocation>
        <location evidence="2">Host nucleus</location>
    </subcellularLocation>
    <text evidence="1 2">PB1 and PA are transported in the host nucleus as a complex.</text>
</comment>
<comment type="alternative products">
    <event type="ribosomal frameshifting"/>
    <isoform>
        <id>Q9EA39-1</id>
        <name>PA</name>
        <sequence type="displayed"/>
    </isoform>
    <isoform>
        <id>P0DJU7-1</id>
        <name>PA-X</name>
        <sequence type="external"/>
    </isoform>
</comment>
<comment type="PTM">
    <text evidence="1 2">Phosphorylated on serines and threonines by host kinases, including human casein kinase II.</text>
</comment>
<comment type="similarity">
    <text evidence="2">Belongs to the influenza viruses PA family.</text>
</comment>
<gene>
    <name evidence="2" type="primary">PA</name>
</gene>
<sequence>MEDFVRQCFNPMIVELAEKAMKEYGEDLKIETNKFAAICTHLEVCFMYSDFHFINEQGESIVVELDDPNALLKHRFEIIEGRDRTMAWTVVNSICNTTGAEKPKFLPDLYDYKKNRFIEIGVTRREVHIYYLEKANKIKSENTHIHIFSFTGEEMATKADYTLDEESRARIKTRLFTIRQEMANRGLWDSFRQSERGEETIEERFEITGTMRRLADQSLPPNFFCLENFRAYVDGFEPNGCIEGKLSQMSKEVNAKIEPFLKTTPRPIKLPDGPPCFQRSKFLLMDALKLSIEDPSHEGEGIPLYDAIKCMRTFFGWKEPYIVKPHERGINSNYLQSWKQVLAELQDIENEEKIPRTKTMKKTSQLKWALGENMAPEKVDFENCRDISDLKQYDSDEPELRSLSSWIQNEFNKACELTDSIWIELDEIGEDVAPIEYIASMRRNYFTAEVSHCRATEYIMKGVYINTALLNASCAAMDDFQLIPMISKCRTKEGRRKTNLYGFIIKGRSHLRNDTDVVNFVSMEFSLTDPRLEPHKWEKYCVLEIGDMLLRSAIGQMSRPMFLYVRTNGTSKIKMKWGMEMRRCLLQSLQQIESMIEAESSVKEKDMTKEFFENKSETWPIGESPKGVEEGSIGKVCRTLLAKSVFNSLYASPQLEGFSAESRKLLLVVQALRDNLEPGTFDLGGLYEAIEECLINDPWVLLNASWFNSFLTHALK</sequence>
<proteinExistence type="inferred from homology"/>
<name>PA_I77A4</name>
<keyword id="KW-1157">Cap snatching</keyword>
<keyword id="KW-0255">Endonuclease</keyword>
<keyword id="KW-1262">Eukaryotic host gene expression shutoff by virus</keyword>
<keyword id="KW-1191">Eukaryotic host transcription shutoff by virus</keyword>
<keyword id="KW-1035">Host cytoplasm</keyword>
<keyword id="KW-1190">Host gene expression shutoff by virus</keyword>
<keyword id="KW-1048">Host nucleus</keyword>
<keyword id="KW-0945">Host-virus interaction</keyword>
<keyword id="KW-0378">Hydrolase</keyword>
<keyword id="KW-1104">Inhibition of host RNA polymerase II by virus</keyword>
<keyword id="KW-0464">Manganese</keyword>
<keyword id="KW-0479">Metal-binding</keyword>
<keyword id="KW-0540">Nuclease</keyword>
<keyword id="KW-0597">Phosphoprotein</keyword>
<keyword id="KW-0688">Ribosomal frameshifting</keyword>
<dbReference type="EC" id="3.1.-.-" evidence="2"/>
<dbReference type="EMBL" id="AF251393">
    <property type="protein sequence ID" value="AAG01747.1"/>
    <property type="molecule type" value="Genomic_RNA"/>
</dbReference>
<dbReference type="EMBL" id="CY009305">
    <property type="protein sequence ID" value="ABD61558.1"/>
    <property type="molecule type" value="Genomic_RNA"/>
</dbReference>
<dbReference type="SMR" id="Q9EA39"/>
<dbReference type="MEROPS" id="S62.001"/>
<dbReference type="Proteomes" id="UP000009193">
    <property type="component" value="Genome"/>
</dbReference>
<dbReference type="GO" id="GO:0030430">
    <property type="term" value="C:host cell cytoplasm"/>
    <property type="evidence" value="ECO:0007669"/>
    <property type="project" value="UniProtKB-SubCell"/>
</dbReference>
<dbReference type="GO" id="GO:0042025">
    <property type="term" value="C:host cell nucleus"/>
    <property type="evidence" value="ECO:0007669"/>
    <property type="project" value="UniProtKB-SubCell"/>
</dbReference>
<dbReference type="GO" id="GO:0004519">
    <property type="term" value="F:endonuclease activity"/>
    <property type="evidence" value="ECO:0007669"/>
    <property type="project" value="UniProtKB-KW"/>
</dbReference>
<dbReference type="GO" id="GO:0046872">
    <property type="term" value="F:metal ion binding"/>
    <property type="evidence" value="ECO:0007669"/>
    <property type="project" value="UniProtKB-KW"/>
</dbReference>
<dbReference type="GO" id="GO:0003723">
    <property type="term" value="F:RNA binding"/>
    <property type="evidence" value="ECO:0007669"/>
    <property type="project" value="UniProtKB-UniRule"/>
</dbReference>
<dbReference type="GO" id="GO:0075526">
    <property type="term" value="P:cap snatching"/>
    <property type="evidence" value="ECO:0007669"/>
    <property type="project" value="UniProtKB-UniRule"/>
</dbReference>
<dbReference type="GO" id="GO:0006351">
    <property type="term" value="P:DNA-templated transcription"/>
    <property type="evidence" value="ECO:0007669"/>
    <property type="project" value="UniProtKB-UniRule"/>
</dbReference>
<dbReference type="GO" id="GO:0039657">
    <property type="term" value="P:symbiont-mediated suppression of host gene expression"/>
    <property type="evidence" value="ECO:0007669"/>
    <property type="project" value="UniProtKB-KW"/>
</dbReference>
<dbReference type="GO" id="GO:0039523">
    <property type="term" value="P:symbiont-mediated suppression of host mRNA transcription via inhibition of RNA polymerase II activity"/>
    <property type="evidence" value="ECO:0007669"/>
    <property type="project" value="UniProtKB-UniRule"/>
</dbReference>
<dbReference type="GO" id="GO:0039694">
    <property type="term" value="P:viral RNA genome replication"/>
    <property type="evidence" value="ECO:0007669"/>
    <property type="project" value="InterPro"/>
</dbReference>
<dbReference type="GO" id="GO:0075523">
    <property type="term" value="P:viral translational frameshifting"/>
    <property type="evidence" value="ECO:0007669"/>
    <property type="project" value="UniProtKB-KW"/>
</dbReference>
<dbReference type="FunFam" id="3.40.91.90:FF:000001">
    <property type="entry name" value="Polymerase acidic protein"/>
    <property type="match status" value="1"/>
</dbReference>
<dbReference type="Gene3D" id="3.40.91.90">
    <property type="entry name" value="Influenza RNA-dependent RNA polymerase subunit PA, endonuclease domain"/>
    <property type="match status" value="1"/>
</dbReference>
<dbReference type="HAMAP" id="MF_04063">
    <property type="entry name" value="INFV_PA"/>
    <property type="match status" value="1"/>
</dbReference>
<dbReference type="InterPro" id="IPR037534">
    <property type="entry name" value="INFV_PA"/>
</dbReference>
<dbReference type="InterPro" id="IPR001009">
    <property type="entry name" value="PA/PA-X"/>
</dbReference>
<dbReference type="InterPro" id="IPR038372">
    <property type="entry name" value="PA/PA-X_sf"/>
</dbReference>
<dbReference type="Pfam" id="PF00603">
    <property type="entry name" value="Flu_PA"/>
    <property type="match status" value="1"/>
</dbReference>
<reference key="1">
    <citation type="journal article" date="2000" name="Virus Res.">
        <title>Genetic characterization of H3N2 influenza viruses isolated from pigs in North America, 1977-1999: evidence for wholly human and reassortant virus genotypes.</title>
        <authorList>
            <person name="Karasin A.I."/>
            <person name="Schutten M.M."/>
            <person name="Cooper L.A."/>
            <person name="Smith C.B."/>
            <person name="Subbarao K."/>
            <person name="Anderson G.A."/>
            <person name="Carman S."/>
            <person name="Olsen C.W."/>
        </authorList>
    </citation>
    <scope>NUCLEOTIDE SEQUENCE [GENOMIC RNA]</scope>
</reference>
<reference key="2">
    <citation type="submission" date="2006-03" db="EMBL/GenBank/DDBJ databases">
        <title>The NIAID influenza genome sequencing project.</title>
        <authorList>
            <person name="Ghedin E."/>
            <person name="Spiro D."/>
            <person name="Miller N."/>
            <person name="Zaborsky J."/>
            <person name="Feldblyum T."/>
            <person name="Subbu V."/>
            <person name="Shumway M."/>
            <person name="Sparenborg J."/>
            <person name="Groveman L."/>
            <person name="Halpin R."/>
            <person name="Sitz J."/>
            <person name="Koo H."/>
            <person name="Salzberg S.L."/>
            <person name="Webster R.G."/>
            <person name="Hoffmann E."/>
            <person name="Krauss S."/>
            <person name="Naeve C."/>
            <person name="Bao Y."/>
            <person name="Bolotov P."/>
            <person name="Dernovoy D."/>
            <person name="Kiryutin B."/>
            <person name="Lipman D.J."/>
            <person name="Tatusova T."/>
        </authorList>
    </citation>
    <scope>NUCLEOTIDE SEQUENCE [GENOMIC RNA]</scope>
</reference>
<protein>
    <recommendedName>
        <fullName evidence="2">Polymerase acidic protein</fullName>
        <ecNumber evidence="2">3.1.-.-</ecNumber>
    </recommendedName>
    <alternativeName>
        <fullName evidence="2">RNA-directed RNA polymerase subunit P2</fullName>
    </alternativeName>
</protein>
<evidence type="ECO:0000250" key="1">
    <source>
        <dbReference type="UniProtKB" id="P03433"/>
    </source>
</evidence>
<evidence type="ECO:0000255" key="2">
    <source>
        <dbReference type="HAMAP-Rule" id="MF_04063"/>
    </source>
</evidence>
<organismHost>
    <name type="scientific">Aves</name>
    <dbReference type="NCBI Taxonomy" id="8782"/>
</organismHost>
<organismHost>
    <name type="scientific">Cetacea</name>
    <name type="common">whales</name>
    <dbReference type="NCBI Taxonomy" id="9721"/>
</organismHost>
<organismHost>
    <name type="scientific">Homo sapiens</name>
    <name type="common">Human</name>
    <dbReference type="NCBI Taxonomy" id="9606"/>
</organismHost>
<organismHost>
    <name type="scientific">Phocidae</name>
    <name type="common">true seals</name>
    <dbReference type="NCBI Taxonomy" id="9709"/>
</organismHost>
<organismHost>
    <name type="scientific">Sus scrofa</name>
    <name type="common">Pig</name>
    <dbReference type="NCBI Taxonomy" id="9823"/>
</organismHost>
<accession>Q9EA39</accession>
<accession>Q288Y9</accession>
<feature type="chain" id="PRO_0000279269" description="Polymerase acidic protein">
    <location>
        <begin position="1"/>
        <end position="716"/>
    </location>
</feature>
<feature type="short sequence motif" description="Nuclear localization signal 1 (NLS1)" evidence="1 2">
    <location>
        <begin position="124"/>
        <end position="139"/>
    </location>
</feature>
<feature type="short sequence motif" description="Nuclear localization signal 2 (NLS2)" evidence="1 2">
    <location>
        <begin position="184"/>
        <end position="247"/>
    </location>
</feature>
<feature type="binding site" evidence="2">
    <location>
        <position position="41"/>
    </location>
    <ligand>
        <name>Mn(2+)</name>
        <dbReference type="ChEBI" id="CHEBI:29035"/>
        <label>1</label>
    </ligand>
</feature>
<feature type="binding site" evidence="2">
    <location>
        <position position="80"/>
    </location>
    <ligand>
        <name>Mn(2+)</name>
        <dbReference type="ChEBI" id="CHEBI:29035"/>
        <label>2</label>
    </ligand>
</feature>
<feature type="binding site" evidence="2">
    <location>
        <position position="108"/>
    </location>
    <ligand>
        <name>Mn(2+)</name>
        <dbReference type="ChEBI" id="CHEBI:29035"/>
        <label>1</label>
    </ligand>
</feature>
<feature type="binding site" evidence="2">
    <location>
        <position position="108"/>
    </location>
    <ligand>
        <name>Mn(2+)</name>
        <dbReference type="ChEBI" id="CHEBI:29035"/>
        <label>2</label>
    </ligand>
</feature>
<feature type="binding site" evidence="2">
    <location>
        <position position="119"/>
    </location>
    <ligand>
        <name>Mn(2+)</name>
        <dbReference type="ChEBI" id="CHEBI:29035"/>
        <label>1</label>
    </ligand>
</feature>
<feature type="binding site" evidence="2">
    <location>
        <position position="120"/>
    </location>
    <ligand>
        <name>Mn(2+)</name>
        <dbReference type="ChEBI" id="CHEBI:29035"/>
        <label>1</label>
    </ligand>
</feature>
<feature type="sequence conflict" description="In Ref. 2; ABD61558." ref="2">
    <original>F</original>
    <variation>S</variation>
    <location>
        <position position="224"/>
    </location>
</feature>
<feature type="sequence conflict" description="In Ref. 2; ABD61558." ref="2">
    <original>K</original>
    <variation>R</variation>
    <location>
        <position position="716"/>
    </location>
</feature>